<keyword id="KW-0496">Mitochondrion</keyword>
<keyword id="KW-1185">Reference proteome</keyword>
<keyword id="KW-0687">Ribonucleoprotein</keyword>
<keyword id="KW-0689">Ribosomal protein</keyword>
<keyword id="KW-0809">Transit peptide</keyword>
<protein>
    <recommendedName>
        <fullName evidence="4">Small ribosomal subunit protein uS10m</fullName>
    </recommendedName>
    <alternativeName>
        <fullName>37S ribosomal protein S10, mitochondrial</fullName>
    </alternativeName>
    <alternativeName>
        <fullName>Mitochondrial ribosomal small subunit protein 10</fullName>
    </alternativeName>
</protein>
<dbReference type="EMBL" id="DS231663">
    <property type="protein sequence ID" value="ESU08066.1"/>
    <property type="molecule type" value="Genomic_DNA"/>
</dbReference>
<dbReference type="EMBL" id="HG970332">
    <property type="protein sequence ID" value="CEF74933.1"/>
    <property type="molecule type" value="Genomic_DNA"/>
</dbReference>
<dbReference type="RefSeq" id="XP_011318551.1">
    <property type="nucleotide sequence ID" value="XM_011320249.1"/>
</dbReference>
<dbReference type="SMR" id="Q4IJK2"/>
<dbReference type="FunCoup" id="Q4IJK2">
    <property type="interactions" value="248"/>
</dbReference>
<dbReference type="STRING" id="229533.Q4IJK2"/>
<dbReference type="GeneID" id="23549975"/>
<dbReference type="KEGG" id="fgr:FGSG_02606"/>
<dbReference type="VEuPathDB" id="FungiDB:FGRAMPH1_01G06257"/>
<dbReference type="eggNOG" id="KOG3321">
    <property type="taxonomic scope" value="Eukaryota"/>
</dbReference>
<dbReference type="HOGENOM" id="CLU_051208_3_0_1"/>
<dbReference type="InParanoid" id="Q4IJK2"/>
<dbReference type="OrthoDB" id="104845at110618"/>
<dbReference type="Proteomes" id="UP000070720">
    <property type="component" value="Chromosome 1"/>
</dbReference>
<dbReference type="GO" id="GO:0005739">
    <property type="term" value="C:mitochondrion"/>
    <property type="evidence" value="ECO:0007669"/>
    <property type="project" value="UniProtKB-SubCell"/>
</dbReference>
<dbReference type="GO" id="GO:1990904">
    <property type="term" value="C:ribonucleoprotein complex"/>
    <property type="evidence" value="ECO:0007669"/>
    <property type="project" value="UniProtKB-KW"/>
</dbReference>
<dbReference type="GO" id="GO:0005840">
    <property type="term" value="C:ribosome"/>
    <property type="evidence" value="ECO:0007669"/>
    <property type="project" value="UniProtKB-KW"/>
</dbReference>
<dbReference type="GO" id="GO:0003735">
    <property type="term" value="F:structural constituent of ribosome"/>
    <property type="evidence" value="ECO:0007669"/>
    <property type="project" value="InterPro"/>
</dbReference>
<dbReference type="GO" id="GO:0006412">
    <property type="term" value="P:translation"/>
    <property type="evidence" value="ECO:0007669"/>
    <property type="project" value="InterPro"/>
</dbReference>
<dbReference type="FunFam" id="3.30.70.600:FF:000003">
    <property type="entry name" value="30S ribosomal protein S10"/>
    <property type="match status" value="1"/>
</dbReference>
<dbReference type="Gene3D" id="3.30.70.600">
    <property type="entry name" value="Ribosomal protein S10 domain"/>
    <property type="match status" value="1"/>
</dbReference>
<dbReference type="HAMAP" id="MF_00508">
    <property type="entry name" value="Ribosomal_uS10"/>
    <property type="match status" value="1"/>
</dbReference>
<dbReference type="InterPro" id="IPR001848">
    <property type="entry name" value="Ribosomal_uS10"/>
</dbReference>
<dbReference type="InterPro" id="IPR027486">
    <property type="entry name" value="Ribosomal_uS10_dom"/>
</dbReference>
<dbReference type="InterPro" id="IPR036838">
    <property type="entry name" value="Ribosomal_uS10_dom_sf"/>
</dbReference>
<dbReference type="PANTHER" id="PTHR11700">
    <property type="entry name" value="30S RIBOSOMAL PROTEIN S10 FAMILY MEMBER"/>
    <property type="match status" value="1"/>
</dbReference>
<dbReference type="Pfam" id="PF00338">
    <property type="entry name" value="Ribosomal_S10"/>
    <property type="match status" value="1"/>
</dbReference>
<dbReference type="SMART" id="SM01403">
    <property type="entry name" value="Ribosomal_S10"/>
    <property type="match status" value="1"/>
</dbReference>
<dbReference type="SUPFAM" id="SSF54999">
    <property type="entry name" value="Ribosomal protein S10"/>
    <property type="match status" value="1"/>
</dbReference>
<gene>
    <name type="primary">RSM10</name>
    <name type="ORF">FGRRES_02606</name>
    <name type="ORF">FGSG_02606</name>
</gene>
<proteinExistence type="inferred from homology"/>
<reference key="1">
    <citation type="journal article" date="2007" name="Science">
        <title>The Fusarium graminearum genome reveals a link between localized polymorphism and pathogen specialization.</title>
        <authorList>
            <person name="Cuomo C.A."/>
            <person name="Gueldener U."/>
            <person name="Xu J.-R."/>
            <person name="Trail F."/>
            <person name="Turgeon B.G."/>
            <person name="Di Pietro A."/>
            <person name="Walton J.D."/>
            <person name="Ma L.-J."/>
            <person name="Baker S.E."/>
            <person name="Rep M."/>
            <person name="Adam G."/>
            <person name="Antoniw J."/>
            <person name="Baldwin T."/>
            <person name="Calvo S.E."/>
            <person name="Chang Y.-L."/>
            <person name="DeCaprio D."/>
            <person name="Gale L.R."/>
            <person name="Gnerre S."/>
            <person name="Goswami R.S."/>
            <person name="Hammond-Kosack K."/>
            <person name="Harris L.J."/>
            <person name="Hilburn K."/>
            <person name="Kennell J.C."/>
            <person name="Kroken S."/>
            <person name="Magnuson J.K."/>
            <person name="Mannhaupt G."/>
            <person name="Mauceli E.W."/>
            <person name="Mewes H.-W."/>
            <person name="Mitterbauer R."/>
            <person name="Muehlbauer G."/>
            <person name="Muensterkoetter M."/>
            <person name="Nelson D."/>
            <person name="O'Donnell K."/>
            <person name="Ouellet T."/>
            <person name="Qi W."/>
            <person name="Quesneville H."/>
            <person name="Roncero M.I.G."/>
            <person name="Seong K.-Y."/>
            <person name="Tetko I.V."/>
            <person name="Urban M."/>
            <person name="Waalwijk C."/>
            <person name="Ward T.J."/>
            <person name="Yao J."/>
            <person name="Birren B.W."/>
            <person name="Kistler H.C."/>
        </authorList>
    </citation>
    <scope>NUCLEOTIDE SEQUENCE [LARGE SCALE GENOMIC DNA]</scope>
    <source>
        <strain>ATCC MYA-4620 / CBS 123657 / FGSC 9075 / NRRL 31084 / PH-1</strain>
    </source>
</reference>
<reference key="2">
    <citation type="journal article" date="2010" name="Nature">
        <title>Comparative genomics reveals mobile pathogenicity chromosomes in Fusarium.</title>
        <authorList>
            <person name="Ma L.-J."/>
            <person name="van der Does H.C."/>
            <person name="Borkovich K.A."/>
            <person name="Coleman J.J."/>
            <person name="Daboussi M.-J."/>
            <person name="Di Pietro A."/>
            <person name="Dufresne M."/>
            <person name="Freitag M."/>
            <person name="Grabherr M."/>
            <person name="Henrissat B."/>
            <person name="Houterman P.M."/>
            <person name="Kang S."/>
            <person name="Shim W.-B."/>
            <person name="Woloshuk C."/>
            <person name="Xie X."/>
            <person name="Xu J.-R."/>
            <person name="Antoniw J."/>
            <person name="Baker S.E."/>
            <person name="Bluhm B.H."/>
            <person name="Breakspear A."/>
            <person name="Brown D.W."/>
            <person name="Butchko R.A.E."/>
            <person name="Chapman S."/>
            <person name="Coulson R."/>
            <person name="Coutinho P.M."/>
            <person name="Danchin E.G.J."/>
            <person name="Diener A."/>
            <person name="Gale L.R."/>
            <person name="Gardiner D.M."/>
            <person name="Goff S."/>
            <person name="Hammond-Kosack K.E."/>
            <person name="Hilburn K."/>
            <person name="Hua-Van A."/>
            <person name="Jonkers W."/>
            <person name="Kazan K."/>
            <person name="Kodira C.D."/>
            <person name="Koehrsen M."/>
            <person name="Kumar L."/>
            <person name="Lee Y.-H."/>
            <person name="Li L."/>
            <person name="Manners J.M."/>
            <person name="Miranda-Saavedra D."/>
            <person name="Mukherjee M."/>
            <person name="Park G."/>
            <person name="Park J."/>
            <person name="Park S.-Y."/>
            <person name="Proctor R.H."/>
            <person name="Regev A."/>
            <person name="Ruiz-Roldan M.C."/>
            <person name="Sain D."/>
            <person name="Sakthikumar S."/>
            <person name="Sykes S."/>
            <person name="Schwartz D.C."/>
            <person name="Turgeon B.G."/>
            <person name="Wapinski I."/>
            <person name="Yoder O."/>
            <person name="Young S."/>
            <person name="Zeng Q."/>
            <person name="Zhou S."/>
            <person name="Galagan J."/>
            <person name="Cuomo C.A."/>
            <person name="Kistler H.C."/>
            <person name="Rep M."/>
        </authorList>
    </citation>
    <scope>GENOME REANNOTATION</scope>
    <source>
        <strain>ATCC MYA-4620 / CBS 123657 / FGSC 9075 / NRRL 31084 / PH-1</strain>
    </source>
</reference>
<reference key="3">
    <citation type="journal article" date="2015" name="BMC Genomics">
        <title>The completed genome sequence of the pathogenic ascomycete fungus Fusarium graminearum.</title>
        <authorList>
            <person name="King R."/>
            <person name="Urban M."/>
            <person name="Hammond-Kosack M.C.U."/>
            <person name="Hassani-Pak K."/>
            <person name="Hammond-Kosack K.E."/>
        </authorList>
    </citation>
    <scope>NUCLEOTIDE SEQUENCE [LARGE SCALE GENOMIC DNA]</scope>
    <source>
        <strain>ATCC MYA-4620 / CBS 123657 / FGSC 9075 / NRRL 31084 / PH-1</strain>
    </source>
</reference>
<evidence type="ECO:0000250" key="1"/>
<evidence type="ECO:0000255" key="2"/>
<evidence type="ECO:0000256" key="3">
    <source>
        <dbReference type="SAM" id="MobiDB-lite"/>
    </source>
</evidence>
<evidence type="ECO:0000305" key="4"/>
<accession>Q4IJK2</accession>
<accession>A0A0E0RUK8</accession>
<accession>V6R0M2</accession>
<organism>
    <name type="scientific">Gibberella zeae (strain ATCC MYA-4620 / CBS 123657 / FGSC 9075 / NRRL 31084 / PH-1)</name>
    <name type="common">Wheat head blight fungus</name>
    <name type="synonym">Fusarium graminearum</name>
    <dbReference type="NCBI Taxonomy" id="229533"/>
    <lineage>
        <taxon>Eukaryota</taxon>
        <taxon>Fungi</taxon>
        <taxon>Dikarya</taxon>
        <taxon>Ascomycota</taxon>
        <taxon>Pezizomycotina</taxon>
        <taxon>Sordariomycetes</taxon>
        <taxon>Hypocreomycetidae</taxon>
        <taxon>Hypocreales</taxon>
        <taxon>Nectriaceae</taxon>
        <taxon>Fusarium</taxon>
    </lineage>
</organism>
<sequence>MMRQSIRPLRAFSSEVSWIARRTQASLAKPGDLVPNKPEPSKNEQEPRFPRSIQALHLKPLKREAEHGIPSCDLQLRSFSVQPLEFFSDFALRAAYYLGLPAYGPVPLPRITERWTVPRDNFIFKKSQENFERKTLRRLIQIRDGNPETVQLWLAYLRKHQFYGVGMKANMWEFSELGEGKKMDALPEAEKGEIDAKWSHIGQTKTIGTMEKVEQILNQRRFREAAGLRVPPTTEA</sequence>
<comment type="function">
    <text evidence="1">Involved in mitochondrial genome encoded proteins translation. Involved in the binding of tRNA to the ribosomes (By similarity).</text>
</comment>
<comment type="subunit">
    <text evidence="1">Part of the mitochondrial small ribosomal subunit.</text>
</comment>
<comment type="subcellular location">
    <subcellularLocation>
        <location evidence="1">Mitochondrion</location>
    </subcellularLocation>
</comment>
<comment type="similarity">
    <text evidence="4">Belongs to the universal ribosomal protein uS10 family.</text>
</comment>
<name>RT10_GIBZE</name>
<feature type="transit peptide" description="Mitochondrion" evidence="2">
    <location>
        <begin position="1"/>
        <end position="24"/>
    </location>
</feature>
<feature type="chain" id="PRO_0000043263" description="Small ribosomal subunit protein uS10m">
    <location>
        <begin position="25"/>
        <end position="236"/>
    </location>
</feature>
<feature type="region of interest" description="Disordered" evidence="3">
    <location>
        <begin position="29"/>
        <end position="49"/>
    </location>
</feature>
<feature type="compositionally biased region" description="Basic and acidic residues" evidence="3">
    <location>
        <begin position="39"/>
        <end position="49"/>
    </location>
</feature>